<accession>Q46378</accession>
<accession>O84629</accession>
<name>MURJ_CHLTR</name>
<organism>
    <name type="scientific">Chlamydia trachomatis serovar D (strain ATCC VR-885 / DSM 19411 / UW-3/Cx)</name>
    <dbReference type="NCBI Taxonomy" id="272561"/>
    <lineage>
        <taxon>Bacteria</taxon>
        <taxon>Pseudomonadati</taxon>
        <taxon>Chlamydiota</taxon>
        <taxon>Chlamydiia</taxon>
        <taxon>Chlamydiales</taxon>
        <taxon>Chlamydiaceae</taxon>
        <taxon>Chlamydia/Chlamydophila group</taxon>
        <taxon>Chlamydia</taxon>
    </lineage>
</organism>
<keyword id="KW-0997">Cell inner membrane</keyword>
<keyword id="KW-1003">Cell membrane</keyword>
<keyword id="KW-0133">Cell shape</keyword>
<keyword id="KW-0961">Cell wall biogenesis/degradation</keyword>
<keyword id="KW-0472">Membrane</keyword>
<keyword id="KW-0573">Peptidoglycan synthesis</keyword>
<keyword id="KW-1185">Reference proteome</keyword>
<keyword id="KW-0812">Transmembrane</keyword>
<keyword id="KW-1133">Transmembrane helix</keyword>
<keyword id="KW-0813">Transport</keyword>
<dbReference type="EMBL" id="AE001273">
    <property type="protein sequence ID" value="AAC68228.1"/>
    <property type="molecule type" value="Genomic_DNA"/>
</dbReference>
<dbReference type="EMBL" id="U50732">
    <property type="protein sequence ID" value="AAD08715.1"/>
    <property type="molecule type" value="Genomic_DNA"/>
</dbReference>
<dbReference type="PIR" id="A71491">
    <property type="entry name" value="A71491"/>
</dbReference>
<dbReference type="RefSeq" id="NP_220141.1">
    <property type="nucleotide sequence ID" value="NC_000117.1"/>
</dbReference>
<dbReference type="RefSeq" id="WP_010725280.1">
    <property type="nucleotide sequence ID" value="NC_000117.1"/>
</dbReference>
<dbReference type="SMR" id="Q46378"/>
<dbReference type="STRING" id="272561.CT_624"/>
<dbReference type="EnsemblBacteria" id="AAC68228">
    <property type="protein sequence ID" value="AAC68228"/>
    <property type="gene ID" value="CT_624"/>
</dbReference>
<dbReference type="GeneID" id="884403"/>
<dbReference type="KEGG" id="ctr:CT_624"/>
<dbReference type="PATRIC" id="fig|272561.5.peg.681"/>
<dbReference type="HOGENOM" id="CLU_497572_0_0_0"/>
<dbReference type="InParanoid" id="Q46378"/>
<dbReference type="OrthoDB" id="9804143at2"/>
<dbReference type="UniPathway" id="UPA00219"/>
<dbReference type="Proteomes" id="UP000000431">
    <property type="component" value="Chromosome"/>
</dbReference>
<dbReference type="GO" id="GO:0005886">
    <property type="term" value="C:plasma membrane"/>
    <property type="evidence" value="ECO:0007669"/>
    <property type="project" value="UniProtKB-SubCell"/>
</dbReference>
<dbReference type="GO" id="GO:0071555">
    <property type="term" value="P:cell wall organization"/>
    <property type="evidence" value="ECO:0007669"/>
    <property type="project" value="UniProtKB-KW"/>
</dbReference>
<dbReference type="GO" id="GO:0009252">
    <property type="term" value="P:peptidoglycan biosynthetic process"/>
    <property type="evidence" value="ECO:0007669"/>
    <property type="project" value="UniProtKB-UniPathway"/>
</dbReference>
<dbReference type="GO" id="GO:0008360">
    <property type="term" value="P:regulation of cell shape"/>
    <property type="evidence" value="ECO:0007669"/>
    <property type="project" value="UniProtKB-KW"/>
</dbReference>
<dbReference type="InterPro" id="IPR052031">
    <property type="entry name" value="Membrane_Transporter-Flippase"/>
</dbReference>
<dbReference type="InterPro" id="IPR004268">
    <property type="entry name" value="MurJ"/>
</dbReference>
<dbReference type="PANTHER" id="PTHR43549">
    <property type="entry name" value="MULTIDRUG RESISTANCE PROTEIN YPNP-RELATED"/>
    <property type="match status" value="1"/>
</dbReference>
<dbReference type="PANTHER" id="PTHR43549:SF3">
    <property type="entry name" value="MULTIDRUG RESISTANCE PROTEIN YPNP-RELATED"/>
    <property type="match status" value="1"/>
</dbReference>
<dbReference type="Pfam" id="PF03023">
    <property type="entry name" value="MurJ"/>
    <property type="match status" value="1"/>
</dbReference>
<dbReference type="PRINTS" id="PR01806">
    <property type="entry name" value="VIRFACTRMVIN"/>
</dbReference>
<reference key="1">
    <citation type="journal article" date="1998" name="Science">
        <title>Genome sequence of an obligate intracellular pathogen of humans: Chlamydia trachomatis.</title>
        <authorList>
            <person name="Stephens R.S."/>
            <person name="Kalman S."/>
            <person name="Lammel C.J."/>
            <person name="Fan J."/>
            <person name="Marathe R."/>
            <person name="Aravind L."/>
            <person name="Mitchell W.P."/>
            <person name="Olinger L."/>
            <person name="Tatusov R.L."/>
            <person name="Zhao Q."/>
            <person name="Koonin E.V."/>
            <person name="Davis R.W."/>
        </authorList>
    </citation>
    <scope>NUCLEOTIDE SEQUENCE [LARGE SCALE GENOMIC DNA]</scope>
    <source>
        <strain>ATCC VR-885 / DSM 19411 / UW-3/Cx</strain>
    </source>
</reference>
<reference key="2">
    <citation type="submission" date="1996-03" db="EMBL/GenBank/DDBJ databases">
        <title>A membrane-associated gene cluster of Chlamydia trachomatis.</title>
        <authorList>
            <person name="Myers G.S.A."/>
            <person name="Sriprakash K.S."/>
        </authorList>
    </citation>
    <scope>NUCLEOTIDE SEQUENCE [GENOMIC DNA]</scope>
    <source>
        <strain>Serovar B</strain>
    </source>
</reference>
<sequence length="536" mass="59881">MRKDDEGSLVRSLFNLLSGTFFSRLTGMLREIVMATYFGADPLVASFWLAFRTIFFLRKLLGGPILGLAFIPHFEFLRAQNISRATFFFRSFSRFFCYSAILFTLIIELGLCVWCSCVTGSLFDTLLLTIILLPSGIFLMMYTVNSTLLHCEKKFFSVGLAPSVVNVSWIGTVFLARNYDPRNRIFGLAVVLVIGFILEWAVTLPGVMKFLGQSKEVPQERDSIRALIAPLSLGLLSMGIFQLNLLCDMWLARYINEVGPLYLMYSVRIQQLPVHLFGLGVFTVLLPAISRCVQDQEHQQGYDLLRFSLKLTVAVMVVMTMGLLLFALPGVRVLYEHGVFPKTAVHAIVEVLRGYSGSIIPMALAPLVSALFYARRNYKVPMLVGIIAAVVNMVLNVIGCLVCKQVAVLAYATSLVSWGQLAMLWYCAGKSLPTYKGLMWRTFKESGKTVITTILAAVITIGVNIVTHTTYVVFIEPLTVPTKPLVSFLDQCGVFFAESALFLSVLFGLAKLLKTEDLMNLISFQYWKGHQSILRN</sequence>
<feature type="chain" id="PRO_0000182005" description="Probable lipid II flippase MurJ">
    <location>
        <begin position="1"/>
        <end position="536"/>
    </location>
</feature>
<feature type="transmembrane region" description="Helical" evidence="2">
    <location>
        <begin position="12"/>
        <end position="34"/>
    </location>
</feature>
<feature type="transmembrane region" description="Helical" evidence="2">
    <location>
        <begin position="54"/>
        <end position="74"/>
    </location>
</feature>
<feature type="transmembrane region" description="Helical" evidence="2">
    <location>
        <begin position="95"/>
        <end position="115"/>
    </location>
</feature>
<feature type="transmembrane region" description="Helical" evidence="2">
    <location>
        <begin position="122"/>
        <end position="142"/>
    </location>
</feature>
<feature type="transmembrane region" description="Helical" evidence="2">
    <location>
        <begin position="155"/>
        <end position="175"/>
    </location>
</feature>
<feature type="transmembrane region" description="Helical" evidence="2">
    <location>
        <begin position="185"/>
        <end position="205"/>
    </location>
</feature>
<feature type="transmembrane region" description="Helical" evidence="2">
    <location>
        <begin position="226"/>
        <end position="246"/>
    </location>
</feature>
<feature type="transmembrane region" description="Helical" evidence="2">
    <location>
        <begin position="269"/>
        <end position="289"/>
    </location>
</feature>
<feature type="transmembrane region" description="Helical" evidence="2">
    <location>
        <begin position="311"/>
        <end position="331"/>
    </location>
</feature>
<feature type="transmembrane region" description="Helical" evidence="2">
    <location>
        <begin position="354"/>
        <end position="374"/>
    </location>
</feature>
<feature type="transmembrane region" description="Helical" evidence="2">
    <location>
        <begin position="382"/>
        <end position="402"/>
    </location>
</feature>
<feature type="transmembrane region" description="Helical" evidence="2">
    <location>
        <begin position="406"/>
        <end position="426"/>
    </location>
</feature>
<feature type="transmembrane region" description="Helical" evidence="2">
    <location>
        <begin position="454"/>
        <end position="474"/>
    </location>
</feature>
<feature type="transmembrane region" description="Helical" evidence="2">
    <location>
        <begin position="493"/>
        <end position="513"/>
    </location>
</feature>
<feature type="sequence variant" description="In strain: Serovar B.">
    <original>S</original>
    <variation>C</variation>
    <location>
        <position position="8"/>
    </location>
</feature>
<feature type="sequence variant" description="In strain: Serovar B.">
    <original>LL</original>
    <variation>FV</variation>
    <location>
        <begin position="324"/>
        <end position="325"/>
    </location>
</feature>
<proteinExistence type="inferred from homology"/>
<gene>
    <name type="primary">murJ</name>
    <name type="synonym">mviN</name>
    <name type="ordered locus">CT_624</name>
</gene>
<protein>
    <recommendedName>
        <fullName evidence="1">Probable lipid II flippase MurJ</fullName>
    </recommendedName>
</protein>
<evidence type="ECO:0000250" key="1">
    <source>
        <dbReference type="UniProtKB" id="P0AF16"/>
    </source>
</evidence>
<evidence type="ECO:0000255" key="2"/>
<evidence type="ECO:0000305" key="3"/>
<comment type="function">
    <text evidence="1">Involved in peptidoglycan biosynthesis. Transports lipid-linked peptidoglycan precursors from the inner to the outer leaflet of the cytoplasmic membrane.</text>
</comment>
<comment type="pathway">
    <text evidence="1">Cell wall biogenesis; peptidoglycan biosynthesis.</text>
</comment>
<comment type="subcellular location">
    <subcellularLocation>
        <location evidence="1">Cell inner membrane</location>
        <topology evidence="2">Multi-pass membrane protein</topology>
    </subcellularLocation>
</comment>
<comment type="similarity">
    <text evidence="3">Belongs to the MurJ/MviN family.</text>
</comment>